<sequence>MIKYLSTNISLYFQENNSCLSKKDVLKIQYTLEAILSDLSKFIIIFLVFLFIKEIPLFLFSFIILNSTRPLLGGIHCKTYYGCLTCSILYFMIILLFTRLFPELNTNFYIVFFILSLAITFIFAPCPNEKRPVKNKATLKILSLISLTFWIILFYLSPLQTRNCILISIFLQIIQVIIINTKGVIFNAKNNKTFFNRTT</sequence>
<gene>
    <name type="primary">cfg02</name>
</gene>
<comment type="function">
    <text evidence="1">May be involved in the proteolytic processing of a quorum sensing system signal molecule precursor.</text>
</comment>
<comment type="subcellular location">
    <subcellularLocation>
        <location evidence="1">Cell membrane</location>
        <topology evidence="1">Multi-pass membrane protein</topology>
    </subcellularLocation>
</comment>
<comment type="similarity">
    <text evidence="1">Belongs to the AgrB family.</text>
</comment>
<keyword id="KW-1003">Cell membrane</keyword>
<keyword id="KW-0378">Hydrolase</keyword>
<keyword id="KW-0472">Membrane</keyword>
<keyword id="KW-0645">Protease</keyword>
<keyword id="KW-0673">Quorum sensing</keyword>
<keyword id="KW-0812">Transmembrane</keyword>
<keyword id="KW-1133">Transmembrane helix</keyword>
<organism>
    <name type="scientific">Clostridium beijerinckii</name>
    <name type="common">Clostridium MP</name>
    <dbReference type="NCBI Taxonomy" id="1520"/>
    <lineage>
        <taxon>Bacteria</taxon>
        <taxon>Bacillati</taxon>
        <taxon>Bacillota</taxon>
        <taxon>Clostridia</taxon>
        <taxon>Eubacteriales</taxon>
        <taxon>Clostridiaceae</taxon>
        <taxon>Clostridium</taxon>
    </lineage>
</organism>
<name>AGRB_CLOBE</name>
<dbReference type="EC" id="3.4.-.-" evidence="1"/>
<dbReference type="EMBL" id="AJ566621">
    <property type="protein sequence ID" value="CAD97578.1"/>
    <property type="molecule type" value="mRNA"/>
</dbReference>
<dbReference type="RefSeq" id="WP_077869169.1">
    <property type="nucleotide sequence ID" value="NZ_BKAK01000166.1"/>
</dbReference>
<dbReference type="GeneID" id="66348102"/>
<dbReference type="GO" id="GO:0005886">
    <property type="term" value="C:plasma membrane"/>
    <property type="evidence" value="ECO:0007669"/>
    <property type="project" value="UniProtKB-SubCell"/>
</dbReference>
<dbReference type="GO" id="GO:0008233">
    <property type="term" value="F:peptidase activity"/>
    <property type="evidence" value="ECO:0007669"/>
    <property type="project" value="UniProtKB-UniRule"/>
</dbReference>
<dbReference type="GO" id="GO:0006508">
    <property type="term" value="P:proteolysis"/>
    <property type="evidence" value="ECO:0007669"/>
    <property type="project" value="UniProtKB-KW"/>
</dbReference>
<dbReference type="GO" id="GO:0009372">
    <property type="term" value="P:quorum sensing"/>
    <property type="evidence" value="ECO:0007669"/>
    <property type="project" value="UniProtKB-UniRule"/>
</dbReference>
<dbReference type="HAMAP" id="MF_00784">
    <property type="entry name" value="AgrB"/>
    <property type="match status" value="1"/>
</dbReference>
<dbReference type="InterPro" id="IPR006741">
    <property type="entry name" value="AgrB"/>
</dbReference>
<dbReference type="Pfam" id="PF04647">
    <property type="entry name" value="AgrB"/>
    <property type="match status" value="1"/>
</dbReference>
<dbReference type="SMART" id="SM00793">
    <property type="entry name" value="AgrB"/>
    <property type="match status" value="1"/>
</dbReference>
<protein>
    <recommendedName>
        <fullName evidence="1">Putative AgrB-like protein</fullName>
        <ecNumber evidence="1">3.4.-.-</ecNumber>
    </recommendedName>
</protein>
<feature type="chain" id="PRO_0000168136" description="Putative AgrB-like protein">
    <location>
        <begin position="1"/>
        <end position="199"/>
    </location>
</feature>
<feature type="transmembrane region" description="Helical" evidence="1">
    <location>
        <begin position="43"/>
        <end position="63"/>
    </location>
</feature>
<feature type="transmembrane region" description="Helical" evidence="1">
    <location>
        <begin position="81"/>
        <end position="101"/>
    </location>
</feature>
<feature type="transmembrane region" description="Helical" evidence="1">
    <location>
        <begin position="108"/>
        <end position="128"/>
    </location>
</feature>
<feature type="transmembrane region" description="Helical" evidence="1">
    <location>
        <begin position="139"/>
        <end position="159"/>
    </location>
</feature>
<feature type="transmembrane region" description="Helical" evidence="1">
    <location>
        <begin position="165"/>
        <end position="185"/>
    </location>
</feature>
<proteinExistence type="evidence at transcript level"/>
<accession>Q7WYU3</accession>
<evidence type="ECO:0000255" key="1">
    <source>
        <dbReference type="HAMAP-Rule" id="MF_00784"/>
    </source>
</evidence>
<reference key="1">
    <citation type="journal article" date="2003" name="Appl. Environ. Microbiol.">
        <title>Functional analysis of the gene cluster involved in production of the bacteriocin circularin A by Clostridium beijerinckii ATCC 25752.</title>
        <authorList>
            <person name="Kemperman R."/>
            <person name="Jonker M."/>
            <person name="Nauta A."/>
            <person name="Kuipers O.P."/>
            <person name="Kok J."/>
        </authorList>
    </citation>
    <scope>NUCLEOTIDE SEQUENCE [GENOMIC DNA]</scope>
    <source>
        <strain>ATCC 25752 / DSM 791 / JCM 1390 / NCIB 9362 / NCTC 13035</strain>
    </source>
</reference>